<dbReference type="EMBL" id="CP000448">
    <property type="protein sequence ID" value="ABI68201.1"/>
    <property type="molecule type" value="Genomic_DNA"/>
</dbReference>
<dbReference type="RefSeq" id="WP_011640306.1">
    <property type="nucleotide sequence ID" value="NC_008346.1"/>
</dbReference>
<dbReference type="SMR" id="Q0AYK3"/>
<dbReference type="STRING" id="335541.Swol_0883"/>
<dbReference type="KEGG" id="swo:Swol_0883"/>
<dbReference type="eggNOG" id="COG0264">
    <property type="taxonomic scope" value="Bacteria"/>
</dbReference>
<dbReference type="HOGENOM" id="CLU_047155_1_1_9"/>
<dbReference type="Proteomes" id="UP000001968">
    <property type="component" value="Chromosome"/>
</dbReference>
<dbReference type="GO" id="GO:0005737">
    <property type="term" value="C:cytoplasm"/>
    <property type="evidence" value="ECO:0007669"/>
    <property type="project" value="UniProtKB-SubCell"/>
</dbReference>
<dbReference type="GO" id="GO:0003746">
    <property type="term" value="F:translation elongation factor activity"/>
    <property type="evidence" value="ECO:0007669"/>
    <property type="project" value="UniProtKB-UniRule"/>
</dbReference>
<dbReference type="CDD" id="cd14275">
    <property type="entry name" value="UBA_EF-Ts"/>
    <property type="match status" value="1"/>
</dbReference>
<dbReference type="FunFam" id="1.10.286.20:FF:000001">
    <property type="entry name" value="Elongation factor Ts"/>
    <property type="match status" value="1"/>
</dbReference>
<dbReference type="FunFam" id="1.10.8.10:FF:000001">
    <property type="entry name" value="Elongation factor Ts"/>
    <property type="match status" value="1"/>
</dbReference>
<dbReference type="Gene3D" id="1.10.286.20">
    <property type="match status" value="1"/>
</dbReference>
<dbReference type="Gene3D" id="1.10.8.10">
    <property type="entry name" value="DNA helicase RuvA subunit, C-terminal domain"/>
    <property type="match status" value="1"/>
</dbReference>
<dbReference type="Gene3D" id="3.30.479.20">
    <property type="entry name" value="Elongation factor Ts, dimerisation domain"/>
    <property type="match status" value="1"/>
</dbReference>
<dbReference type="HAMAP" id="MF_00050">
    <property type="entry name" value="EF_Ts"/>
    <property type="match status" value="1"/>
</dbReference>
<dbReference type="InterPro" id="IPR036402">
    <property type="entry name" value="EF-Ts_dimer_sf"/>
</dbReference>
<dbReference type="InterPro" id="IPR001816">
    <property type="entry name" value="Transl_elong_EFTs/EF1B"/>
</dbReference>
<dbReference type="InterPro" id="IPR014039">
    <property type="entry name" value="Transl_elong_EFTs/EF1B_dimer"/>
</dbReference>
<dbReference type="InterPro" id="IPR018101">
    <property type="entry name" value="Transl_elong_Ts_CS"/>
</dbReference>
<dbReference type="InterPro" id="IPR009060">
    <property type="entry name" value="UBA-like_sf"/>
</dbReference>
<dbReference type="NCBIfam" id="TIGR00116">
    <property type="entry name" value="tsf"/>
    <property type="match status" value="2"/>
</dbReference>
<dbReference type="PANTHER" id="PTHR11741">
    <property type="entry name" value="ELONGATION FACTOR TS"/>
    <property type="match status" value="1"/>
</dbReference>
<dbReference type="PANTHER" id="PTHR11741:SF0">
    <property type="entry name" value="ELONGATION FACTOR TS, MITOCHONDRIAL"/>
    <property type="match status" value="1"/>
</dbReference>
<dbReference type="Pfam" id="PF00889">
    <property type="entry name" value="EF_TS"/>
    <property type="match status" value="1"/>
</dbReference>
<dbReference type="SUPFAM" id="SSF54713">
    <property type="entry name" value="Elongation factor Ts (EF-Ts), dimerisation domain"/>
    <property type="match status" value="1"/>
</dbReference>
<dbReference type="SUPFAM" id="SSF46934">
    <property type="entry name" value="UBA-like"/>
    <property type="match status" value="1"/>
</dbReference>
<dbReference type="PROSITE" id="PS01126">
    <property type="entry name" value="EF_TS_1"/>
    <property type="match status" value="1"/>
</dbReference>
<dbReference type="PROSITE" id="PS01127">
    <property type="entry name" value="EF_TS_2"/>
    <property type="match status" value="1"/>
</dbReference>
<keyword id="KW-0963">Cytoplasm</keyword>
<keyword id="KW-0251">Elongation factor</keyword>
<keyword id="KW-0648">Protein biosynthesis</keyword>
<keyword id="KW-1185">Reference proteome</keyword>
<reference key="1">
    <citation type="journal article" date="2010" name="Environ. Microbiol.">
        <title>The genome of Syntrophomonas wolfei: new insights into syntrophic metabolism and biohydrogen production.</title>
        <authorList>
            <person name="Sieber J.R."/>
            <person name="Sims D.R."/>
            <person name="Han C."/>
            <person name="Kim E."/>
            <person name="Lykidis A."/>
            <person name="Lapidus A.L."/>
            <person name="McDonnald E."/>
            <person name="Rohlin L."/>
            <person name="Culley D.E."/>
            <person name="Gunsalus R."/>
            <person name="McInerney M.J."/>
        </authorList>
    </citation>
    <scope>NUCLEOTIDE SEQUENCE [LARGE SCALE GENOMIC DNA]</scope>
    <source>
        <strain>DSM 2245B / Goettingen</strain>
    </source>
</reference>
<feature type="chain" id="PRO_1000006199" description="Elongation factor Ts">
    <location>
        <begin position="1"/>
        <end position="214"/>
    </location>
</feature>
<feature type="region of interest" description="Involved in Mg(2+) ion dislocation from EF-Tu" evidence="1">
    <location>
        <begin position="80"/>
        <end position="83"/>
    </location>
</feature>
<sequence>MITAEMVKELRERTGAGMMDCKRALVETNGDIEKAIDELRTKGLAKAAKKAGRVASEGVVTSYIHGGGRIGVLVEVNCETDFVAKTNDFKQLAYDIAMQIAASNPEYLNREEVPQEVINREKEILKAQALEEGKPEKVIEKMVEGRVEKFFKERCLLEQAFIKDLDKSVQELINENIARMGENITIRRFARYEVGEGIEKESCDFASEVMSQLK</sequence>
<gene>
    <name evidence="1" type="primary">tsf</name>
    <name type="ordered locus">Swol_0883</name>
</gene>
<accession>Q0AYK3</accession>
<name>EFTS_SYNWW</name>
<comment type="function">
    <text evidence="1">Associates with the EF-Tu.GDP complex and induces the exchange of GDP to GTP. It remains bound to the aminoacyl-tRNA.EF-Tu.GTP complex up to the GTP hydrolysis stage on the ribosome.</text>
</comment>
<comment type="subcellular location">
    <subcellularLocation>
        <location evidence="1">Cytoplasm</location>
    </subcellularLocation>
</comment>
<comment type="similarity">
    <text evidence="1">Belongs to the EF-Ts family.</text>
</comment>
<proteinExistence type="inferred from homology"/>
<protein>
    <recommendedName>
        <fullName evidence="1">Elongation factor Ts</fullName>
        <shortName evidence="1">EF-Ts</shortName>
    </recommendedName>
</protein>
<evidence type="ECO:0000255" key="1">
    <source>
        <dbReference type="HAMAP-Rule" id="MF_00050"/>
    </source>
</evidence>
<organism>
    <name type="scientific">Syntrophomonas wolfei subsp. wolfei (strain DSM 2245B / Goettingen)</name>
    <dbReference type="NCBI Taxonomy" id="335541"/>
    <lineage>
        <taxon>Bacteria</taxon>
        <taxon>Bacillati</taxon>
        <taxon>Bacillota</taxon>
        <taxon>Clostridia</taxon>
        <taxon>Eubacteriales</taxon>
        <taxon>Syntrophomonadaceae</taxon>
        <taxon>Syntrophomonas</taxon>
    </lineage>
</organism>